<accession>P06912</accession>
<protein>
    <recommendedName>
        <fullName>Retinol-binding protein 4</fullName>
    </recommendedName>
    <alternativeName>
        <fullName>Plasma retinol-binding protein</fullName>
        <shortName>PRBP</shortName>
        <shortName>RBP</shortName>
    </alternativeName>
</protein>
<keyword id="KW-0903">Direct protein sequencing</keyword>
<keyword id="KW-1015">Disulfide bond</keyword>
<keyword id="KW-0488">Methylation</keyword>
<keyword id="KW-1185">Reference proteome</keyword>
<keyword id="KW-0683">Retinol-binding</keyword>
<keyword id="KW-0964">Secreted</keyword>
<keyword id="KW-0732">Signal</keyword>
<keyword id="KW-0813">Transport</keyword>
<keyword id="KW-0845">Vitamin A</keyword>
<proteinExistence type="evidence at protein level"/>
<gene>
    <name type="primary">RBP4</name>
</gene>
<evidence type="ECO:0000250" key="1">
    <source>
        <dbReference type="UniProtKB" id="P02753"/>
    </source>
</evidence>
<evidence type="ECO:0000250" key="2">
    <source>
        <dbReference type="UniProtKB" id="P27485"/>
    </source>
</evidence>
<evidence type="ECO:0000250" key="3">
    <source>
        <dbReference type="UniProtKB" id="Q00724"/>
    </source>
</evidence>
<evidence type="ECO:0000269" key="4">
    <source>
    </source>
</evidence>
<evidence type="ECO:0000305" key="5"/>
<organism>
    <name type="scientific">Oryctolagus cuniculus</name>
    <name type="common">Rabbit</name>
    <dbReference type="NCBI Taxonomy" id="9986"/>
    <lineage>
        <taxon>Eukaryota</taxon>
        <taxon>Metazoa</taxon>
        <taxon>Chordata</taxon>
        <taxon>Craniata</taxon>
        <taxon>Vertebrata</taxon>
        <taxon>Euteleostomi</taxon>
        <taxon>Mammalia</taxon>
        <taxon>Eutheria</taxon>
        <taxon>Euarchontoglires</taxon>
        <taxon>Glires</taxon>
        <taxon>Lagomorpha</taxon>
        <taxon>Leporidae</taxon>
        <taxon>Oryctolagus</taxon>
    </lineage>
</organism>
<feature type="signal peptide" evidence="4">
    <location>
        <begin position="1"/>
        <end position="18"/>
    </location>
</feature>
<feature type="chain" id="PRO_0000017969" description="Retinol-binding protein 4">
    <location>
        <begin position="19"/>
        <end position="201"/>
    </location>
</feature>
<feature type="binding site" evidence="2">
    <location>
        <position position="116"/>
    </location>
    <ligand>
        <name>substrate</name>
    </ligand>
</feature>
<feature type="modified residue" description="Omega-N-methylarginine" evidence="3">
    <location>
        <position position="139"/>
    </location>
</feature>
<feature type="disulfide bond" evidence="1">
    <location>
        <begin position="22"/>
        <end position="178"/>
    </location>
</feature>
<feature type="disulfide bond" evidence="1">
    <location>
        <begin position="88"/>
        <end position="192"/>
    </location>
</feature>
<feature type="disulfide bond" evidence="1">
    <location>
        <begin position="138"/>
        <end position="147"/>
    </location>
</feature>
<sequence>MEWVWALVLLAALGSGRGERDCRVSSFRVKENFDKARFAGTWYAMAKKDPEGLFLQDNIVAEFSVDENGHMSATAKGRVRLLNNWDVCADMVGTFTDTEDPAKFKMKYWGVASFLQRGNDDHWIIDTDYDTFAVQYSCRLLNFDGTCADSYSFVFSRDPHGLPPDVQKLVRQRQEELCLSRQYRLIVHNGYCDDKSVRNLL</sequence>
<comment type="function">
    <text evidence="1">Retinol-binding protein that mediates retinol transport in blood plasma. Delivers retinol from the liver stores to the peripheral tissues. Transfers the bound all-trans retinol to STRA6, that then facilitates retinol transport across the cell membrane.</text>
</comment>
<comment type="subunit">
    <text evidence="1">Interacts with TTR. Interaction with TTR prevents its loss by filtration through the kidney glomeruli. Interacts with STRA6.</text>
</comment>
<comment type="subcellular location">
    <subcellularLocation>
        <location evidence="4">Secreted</location>
    </subcellularLocation>
</comment>
<comment type="similarity">
    <text evidence="5">Belongs to the calycin superfamily. Lipocalin family.</text>
</comment>
<reference key="1">
    <citation type="journal article" date="1992" name="Exp. Eye Res.">
        <title>The lacrimal gland synthesizes retinol-binding protein.</title>
        <authorList>
            <person name="Lee S.Y."/>
            <person name="Ubels J.L."/>
            <person name="Soprano D.R."/>
        </authorList>
    </citation>
    <scope>NUCLEOTIDE SEQUENCE [MRNA]</scope>
</reference>
<reference key="2">
    <citation type="journal article" date="1985" name="J. Biol. Chem.">
        <title>Amino acid sequence homologies between rabbit, rat, and human serum retinol-binding proteins.</title>
        <authorList>
            <person name="Sundelin J."/>
            <person name="Laurent B.C."/>
            <person name="Anundi H."/>
            <person name="Traegaardh L."/>
            <person name="Larhammar D."/>
            <person name="Bjoerck L."/>
            <person name="Eriksson U."/>
            <person name="Aakerstroem B."/>
            <person name="Jones A."/>
            <person name="Newcomer M."/>
            <person name="Peterson P.A."/>
            <person name="Rask L."/>
        </authorList>
    </citation>
    <scope>PROTEIN SEQUENCE OF 19-201</scope>
    <scope>SUBCELLULAR LOCATION</scope>
</reference>
<dbReference type="EMBL" id="S45958">
    <property type="protein sequence ID" value="AAB23582.1"/>
    <property type="molecule type" value="mRNA"/>
</dbReference>
<dbReference type="PIR" id="A49178">
    <property type="entry name" value="VARB"/>
</dbReference>
<dbReference type="RefSeq" id="NP_001075790.1">
    <property type="nucleotide sequence ID" value="NM_001082321.1"/>
</dbReference>
<dbReference type="SMR" id="P06912"/>
<dbReference type="FunCoup" id="P06912">
    <property type="interactions" value="20"/>
</dbReference>
<dbReference type="STRING" id="9986.ENSOCUP00000009070"/>
<dbReference type="PaxDb" id="9986-ENSOCUP00000009070"/>
<dbReference type="GeneID" id="100009161"/>
<dbReference type="KEGG" id="ocu:100009161"/>
<dbReference type="CTD" id="5950"/>
<dbReference type="eggNOG" id="ENOG502RXEW">
    <property type="taxonomic scope" value="Eukaryota"/>
</dbReference>
<dbReference type="InParanoid" id="P06912"/>
<dbReference type="OrthoDB" id="9923952at2759"/>
<dbReference type="Proteomes" id="UP000001811">
    <property type="component" value="Unplaced"/>
</dbReference>
<dbReference type="GO" id="GO:0005615">
    <property type="term" value="C:extracellular space"/>
    <property type="evidence" value="ECO:0000314"/>
    <property type="project" value="UniProtKB"/>
</dbReference>
<dbReference type="GO" id="GO:0016918">
    <property type="term" value="F:retinal binding"/>
    <property type="evidence" value="ECO:0007669"/>
    <property type="project" value="UniProtKB-KW"/>
</dbReference>
<dbReference type="GO" id="GO:0019841">
    <property type="term" value="F:retinol binding"/>
    <property type="evidence" value="ECO:0007669"/>
    <property type="project" value="UniProtKB-KW"/>
</dbReference>
<dbReference type="GO" id="GO:0034632">
    <property type="term" value="F:retinol transmembrane transporter activity"/>
    <property type="evidence" value="ECO:0007669"/>
    <property type="project" value="InterPro"/>
</dbReference>
<dbReference type="CDD" id="cd00743">
    <property type="entry name" value="lipocalin_RBP_like"/>
    <property type="match status" value="1"/>
</dbReference>
<dbReference type="FunFam" id="2.40.128.20:FF:000004">
    <property type="entry name" value="Retinol-binding protein 4"/>
    <property type="match status" value="1"/>
</dbReference>
<dbReference type="Gene3D" id="2.40.128.20">
    <property type="match status" value="1"/>
</dbReference>
<dbReference type="InterPro" id="IPR012674">
    <property type="entry name" value="Calycin"/>
</dbReference>
<dbReference type="InterPro" id="IPR022271">
    <property type="entry name" value="Lipocalin_ApoD"/>
</dbReference>
<dbReference type="InterPro" id="IPR022272">
    <property type="entry name" value="Lipocalin_CS"/>
</dbReference>
<dbReference type="InterPro" id="IPR000566">
    <property type="entry name" value="Lipocln_cytosolic_FA-bd_dom"/>
</dbReference>
<dbReference type="InterPro" id="IPR002449">
    <property type="entry name" value="Retinol-bd/Purpurin"/>
</dbReference>
<dbReference type="PANTHER" id="PTHR11873">
    <property type="entry name" value="RETINOL-BINDING PROTEIN 4"/>
    <property type="match status" value="1"/>
</dbReference>
<dbReference type="PANTHER" id="PTHR11873:SF2">
    <property type="entry name" value="RETINOL-BINDING PROTEIN 4"/>
    <property type="match status" value="1"/>
</dbReference>
<dbReference type="Pfam" id="PF00061">
    <property type="entry name" value="Lipocalin"/>
    <property type="match status" value="1"/>
</dbReference>
<dbReference type="PIRSF" id="PIRSF036893">
    <property type="entry name" value="Lipocalin_ApoD"/>
    <property type="match status" value="1"/>
</dbReference>
<dbReference type="PIRSF" id="PIRSF500204">
    <property type="entry name" value="RBP_purpurin"/>
    <property type="match status" value="1"/>
</dbReference>
<dbReference type="PRINTS" id="PR00179">
    <property type="entry name" value="LIPOCALIN"/>
</dbReference>
<dbReference type="PRINTS" id="PR01174">
    <property type="entry name" value="RETINOLBNDNG"/>
</dbReference>
<dbReference type="SUPFAM" id="SSF50814">
    <property type="entry name" value="Lipocalins"/>
    <property type="match status" value="1"/>
</dbReference>
<dbReference type="PROSITE" id="PS00213">
    <property type="entry name" value="LIPOCALIN"/>
    <property type="match status" value="1"/>
</dbReference>
<name>RET4_RABIT</name>